<name>PLSX_STRT1</name>
<protein>
    <recommendedName>
        <fullName evidence="1">Phosphate acyltransferase</fullName>
        <ecNumber evidence="1">2.3.1.274</ecNumber>
    </recommendedName>
    <alternativeName>
        <fullName evidence="1">Acyl-ACP phosphotransacylase</fullName>
    </alternativeName>
    <alternativeName>
        <fullName evidence="1">Acyl-[acyl-carrier-protein]--phosphate acyltransferase</fullName>
    </alternativeName>
    <alternativeName>
        <fullName evidence="1">Phosphate-acyl-ACP acyltransferase</fullName>
    </alternativeName>
</protein>
<accession>Q5M208</accession>
<keyword id="KW-0963">Cytoplasm</keyword>
<keyword id="KW-0444">Lipid biosynthesis</keyword>
<keyword id="KW-0443">Lipid metabolism</keyword>
<keyword id="KW-0594">Phospholipid biosynthesis</keyword>
<keyword id="KW-1208">Phospholipid metabolism</keyword>
<keyword id="KW-0808">Transferase</keyword>
<dbReference type="EC" id="2.3.1.274" evidence="1"/>
<dbReference type="EMBL" id="CP000024">
    <property type="protein sequence ID" value="AAV61646.1"/>
    <property type="molecule type" value="Genomic_DNA"/>
</dbReference>
<dbReference type="RefSeq" id="WP_011225258.1">
    <property type="nucleotide sequence ID" value="NC_006449.1"/>
</dbReference>
<dbReference type="SMR" id="Q5M208"/>
<dbReference type="GeneID" id="66897948"/>
<dbReference type="KEGG" id="stc:str0028"/>
<dbReference type="HOGENOM" id="CLU_039379_1_1_9"/>
<dbReference type="UniPathway" id="UPA00085"/>
<dbReference type="GO" id="GO:0005737">
    <property type="term" value="C:cytoplasm"/>
    <property type="evidence" value="ECO:0007669"/>
    <property type="project" value="UniProtKB-SubCell"/>
</dbReference>
<dbReference type="GO" id="GO:0043811">
    <property type="term" value="F:phosphate:acyl-[acyl carrier protein] acyltransferase activity"/>
    <property type="evidence" value="ECO:0007669"/>
    <property type="project" value="UniProtKB-UniRule"/>
</dbReference>
<dbReference type="GO" id="GO:0006633">
    <property type="term" value="P:fatty acid biosynthetic process"/>
    <property type="evidence" value="ECO:0007669"/>
    <property type="project" value="UniProtKB-UniRule"/>
</dbReference>
<dbReference type="GO" id="GO:0008654">
    <property type="term" value="P:phospholipid biosynthetic process"/>
    <property type="evidence" value="ECO:0007669"/>
    <property type="project" value="UniProtKB-KW"/>
</dbReference>
<dbReference type="Gene3D" id="3.40.718.10">
    <property type="entry name" value="Isopropylmalate Dehydrogenase"/>
    <property type="match status" value="1"/>
</dbReference>
<dbReference type="HAMAP" id="MF_00019">
    <property type="entry name" value="PlsX"/>
    <property type="match status" value="1"/>
</dbReference>
<dbReference type="InterPro" id="IPR003664">
    <property type="entry name" value="FA_synthesis"/>
</dbReference>
<dbReference type="InterPro" id="IPR012281">
    <property type="entry name" value="Phospholipid_synth_PlsX-like"/>
</dbReference>
<dbReference type="NCBIfam" id="TIGR00182">
    <property type="entry name" value="plsX"/>
    <property type="match status" value="1"/>
</dbReference>
<dbReference type="PANTHER" id="PTHR30100">
    <property type="entry name" value="FATTY ACID/PHOSPHOLIPID SYNTHESIS PROTEIN PLSX"/>
    <property type="match status" value="1"/>
</dbReference>
<dbReference type="PANTHER" id="PTHR30100:SF1">
    <property type="entry name" value="PHOSPHATE ACYLTRANSFERASE"/>
    <property type="match status" value="1"/>
</dbReference>
<dbReference type="Pfam" id="PF02504">
    <property type="entry name" value="FA_synthesis"/>
    <property type="match status" value="1"/>
</dbReference>
<dbReference type="PIRSF" id="PIRSF002465">
    <property type="entry name" value="Phsphlp_syn_PlsX"/>
    <property type="match status" value="1"/>
</dbReference>
<dbReference type="SUPFAM" id="SSF53659">
    <property type="entry name" value="Isocitrate/Isopropylmalate dehydrogenase-like"/>
    <property type="match status" value="1"/>
</dbReference>
<gene>
    <name evidence="1" type="primary">plsX</name>
    <name type="ordered locus">str0028</name>
</gene>
<organism>
    <name type="scientific">Streptococcus thermophilus (strain CNRZ 1066)</name>
    <dbReference type="NCBI Taxonomy" id="299768"/>
    <lineage>
        <taxon>Bacteria</taxon>
        <taxon>Bacillati</taxon>
        <taxon>Bacillota</taxon>
        <taxon>Bacilli</taxon>
        <taxon>Lactobacillales</taxon>
        <taxon>Streptococcaceae</taxon>
        <taxon>Streptococcus</taxon>
    </lineage>
</organism>
<sequence>MHVIAVDAMGGDNAPQAIVEGVNQALAEFKDIEIQLYGDEAKIKNYLIANERVSIVHTDEKINSDDEPVKAIRKKKKASMVLGAQAVKEKAADAVISAGNTGALLAAGLFVVGRIKGVERPGLMSTMPSFTGQPFDMLDLGANAENTANHLHQYAILGSFYAKNVRGIATPRVGLLNNGTEKTKGDSLRKEAFELLSQEASINFIGNVEAREIMSGAADVVVADGFTGNAVLKAIEGTGLGTMKTLKSAIMNGGLKAKLGAFLLKDRLKGMKETMDYSSAGGAVLFGLKAPVVKCHGSSDAKAVYYTIKQVRKMLDTKVVEQLVDAFDPKEEVN</sequence>
<comment type="function">
    <text evidence="1">Catalyzes the reversible formation of acyl-phosphate (acyl-PO(4)) from acyl-[acyl-carrier-protein] (acyl-ACP). This enzyme utilizes acyl-ACP as fatty acyl donor, but not acyl-CoA.</text>
</comment>
<comment type="catalytic activity">
    <reaction evidence="1">
        <text>a fatty acyl-[ACP] + phosphate = an acyl phosphate + holo-[ACP]</text>
        <dbReference type="Rhea" id="RHEA:42292"/>
        <dbReference type="Rhea" id="RHEA-COMP:9685"/>
        <dbReference type="Rhea" id="RHEA-COMP:14125"/>
        <dbReference type="ChEBI" id="CHEBI:43474"/>
        <dbReference type="ChEBI" id="CHEBI:59918"/>
        <dbReference type="ChEBI" id="CHEBI:64479"/>
        <dbReference type="ChEBI" id="CHEBI:138651"/>
        <dbReference type="EC" id="2.3.1.274"/>
    </reaction>
</comment>
<comment type="pathway">
    <text evidence="1">Lipid metabolism; phospholipid metabolism.</text>
</comment>
<comment type="subunit">
    <text evidence="1">Homodimer. Probably interacts with PlsY.</text>
</comment>
<comment type="subcellular location">
    <subcellularLocation>
        <location evidence="1">Cytoplasm</location>
    </subcellularLocation>
    <text evidence="1">Associated with the membrane possibly through PlsY.</text>
</comment>
<comment type="similarity">
    <text evidence="1">Belongs to the PlsX family.</text>
</comment>
<proteinExistence type="inferred from homology"/>
<reference key="1">
    <citation type="journal article" date="2004" name="Nat. Biotechnol.">
        <title>Complete sequence and comparative genome analysis of the dairy bacterium Streptococcus thermophilus.</title>
        <authorList>
            <person name="Bolotin A."/>
            <person name="Quinquis B."/>
            <person name="Renault P."/>
            <person name="Sorokin A."/>
            <person name="Ehrlich S.D."/>
            <person name="Kulakauskas S."/>
            <person name="Lapidus A."/>
            <person name="Goltsman E."/>
            <person name="Mazur M."/>
            <person name="Pusch G.D."/>
            <person name="Fonstein M."/>
            <person name="Overbeek R."/>
            <person name="Kyprides N."/>
            <person name="Purnelle B."/>
            <person name="Prozzi D."/>
            <person name="Ngui K."/>
            <person name="Masuy D."/>
            <person name="Hancy F."/>
            <person name="Burteau S."/>
            <person name="Boutry M."/>
            <person name="Delcour J."/>
            <person name="Goffeau A."/>
            <person name="Hols P."/>
        </authorList>
    </citation>
    <scope>NUCLEOTIDE SEQUENCE [LARGE SCALE GENOMIC DNA]</scope>
    <source>
        <strain>CNRZ 1066</strain>
    </source>
</reference>
<feature type="chain" id="PRO_1000001848" description="Phosphate acyltransferase">
    <location>
        <begin position="1"/>
        <end position="334"/>
    </location>
</feature>
<evidence type="ECO:0000255" key="1">
    <source>
        <dbReference type="HAMAP-Rule" id="MF_00019"/>
    </source>
</evidence>